<reference key="1">
    <citation type="journal article" date="2001" name="Nature">
        <title>Complete genome sequence of a multiple drug resistant Salmonella enterica serovar Typhi CT18.</title>
        <authorList>
            <person name="Parkhill J."/>
            <person name="Dougan G."/>
            <person name="James K.D."/>
            <person name="Thomson N.R."/>
            <person name="Pickard D."/>
            <person name="Wain J."/>
            <person name="Churcher C.M."/>
            <person name="Mungall K.L."/>
            <person name="Bentley S.D."/>
            <person name="Holden M.T.G."/>
            <person name="Sebaihia M."/>
            <person name="Baker S."/>
            <person name="Basham D."/>
            <person name="Brooks K."/>
            <person name="Chillingworth T."/>
            <person name="Connerton P."/>
            <person name="Cronin A."/>
            <person name="Davis P."/>
            <person name="Davies R.M."/>
            <person name="Dowd L."/>
            <person name="White N."/>
            <person name="Farrar J."/>
            <person name="Feltwell T."/>
            <person name="Hamlin N."/>
            <person name="Haque A."/>
            <person name="Hien T.T."/>
            <person name="Holroyd S."/>
            <person name="Jagels K."/>
            <person name="Krogh A."/>
            <person name="Larsen T.S."/>
            <person name="Leather S."/>
            <person name="Moule S."/>
            <person name="O'Gaora P."/>
            <person name="Parry C."/>
            <person name="Quail M.A."/>
            <person name="Rutherford K.M."/>
            <person name="Simmonds M."/>
            <person name="Skelton J."/>
            <person name="Stevens K."/>
            <person name="Whitehead S."/>
            <person name="Barrell B.G."/>
        </authorList>
    </citation>
    <scope>NUCLEOTIDE SEQUENCE [LARGE SCALE GENOMIC DNA]</scope>
    <source>
        <strain>CT18</strain>
    </source>
</reference>
<reference key="2">
    <citation type="journal article" date="2003" name="J. Bacteriol.">
        <title>Comparative genomics of Salmonella enterica serovar Typhi strains Ty2 and CT18.</title>
        <authorList>
            <person name="Deng W."/>
            <person name="Liou S.-R."/>
            <person name="Plunkett G. III"/>
            <person name="Mayhew G.F."/>
            <person name="Rose D.J."/>
            <person name="Burland V."/>
            <person name="Kodoyianni V."/>
            <person name="Schwartz D.C."/>
            <person name="Blattner F.R."/>
        </authorList>
    </citation>
    <scope>NUCLEOTIDE SEQUENCE [LARGE SCALE GENOMIC DNA]</scope>
    <source>
        <strain>ATCC 700931 / Ty2</strain>
    </source>
</reference>
<protein>
    <recommendedName>
        <fullName evidence="1">Thiol peroxidase</fullName>
        <shortName evidence="1">Tpx</shortName>
        <ecNumber evidence="1">1.11.1.24</ecNumber>
    </recommendedName>
    <alternativeName>
        <fullName evidence="1">Peroxiredoxin tpx</fullName>
        <shortName evidence="1">Prx</shortName>
    </alternativeName>
    <alternativeName>
        <fullName evidence="1">Thioredoxin peroxidase</fullName>
    </alternativeName>
    <alternativeName>
        <fullName evidence="1">Thioredoxin-dependent peroxiredoxin</fullName>
    </alternativeName>
</protein>
<accession>Q8Z7A8</accession>
<proteinExistence type="inferred from homology"/>
<gene>
    <name evidence="1" type="primary">tpx</name>
    <name type="ordered locus">STY1381</name>
    <name type="ordered locus">t1586</name>
</gene>
<comment type="function">
    <text evidence="1">Thiol-specific peroxidase that catalyzes the reduction of hydrogen peroxide and organic hydroperoxides to water and alcohols, respectively. Plays a role in cell protection against oxidative stress by detoxifying peroxides.</text>
</comment>
<comment type="catalytic activity">
    <reaction evidence="1">
        <text>a hydroperoxide + [thioredoxin]-dithiol = an alcohol + [thioredoxin]-disulfide + H2O</text>
        <dbReference type="Rhea" id="RHEA:62620"/>
        <dbReference type="Rhea" id="RHEA-COMP:10698"/>
        <dbReference type="Rhea" id="RHEA-COMP:10700"/>
        <dbReference type="ChEBI" id="CHEBI:15377"/>
        <dbReference type="ChEBI" id="CHEBI:29950"/>
        <dbReference type="ChEBI" id="CHEBI:30879"/>
        <dbReference type="ChEBI" id="CHEBI:35924"/>
        <dbReference type="ChEBI" id="CHEBI:50058"/>
        <dbReference type="EC" id="1.11.1.24"/>
    </reaction>
</comment>
<comment type="subunit">
    <text evidence="1">Homodimer.</text>
</comment>
<comment type="miscellaneous">
    <text evidence="1">The active site is a conserved redox-active cysteine residue, the peroxidatic cysteine (C(P)), which makes the nucleophilic attack on the peroxide substrate. The peroxide oxidizes the C(P)-SH to cysteine sulfenic acid (C(P)-SOH), which then reacts with another cysteine residue, the resolving cysteine (C(R)), to form a disulfide bridge. The disulfide is subsequently reduced by an appropriate electron donor to complete the catalytic cycle. In this atypical 2-Cys peroxiredoxin, C(R) is present in the same subunit to form an intramolecular disulfide. The disulfide is subsequently reduced by thioredoxin.</text>
</comment>
<comment type="similarity">
    <text evidence="1">Belongs to the peroxiredoxin family. Tpx subfamily.</text>
</comment>
<evidence type="ECO:0000255" key="1">
    <source>
        <dbReference type="HAMAP-Rule" id="MF_00269"/>
    </source>
</evidence>
<feature type="chain" id="PRO_0000187894" description="Thiol peroxidase">
    <location>
        <begin position="1"/>
        <end position="168"/>
    </location>
</feature>
<feature type="domain" description="Thioredoxin" evidence="1">
    <location>
        <begin position="19"/>
        <end position="168"/>
    </location>
</feature>
<feature type="active site" description="Cysteine sulfenic acid (-SOH) intermediate" evidence="1">
    <location>
        <position position="61"/>
    </location>
</feature>
<feature type="disulfide bond" description="Redox-active" evidence="1">
    <location>
        <begin position="61"/>
        <end position="95"/>
    </location>
</feature>
<name>TPX_SALTI</name>
<organism>
    <name type="scientific">Salmonella typhi</name>
    <dbReference type="NCBI Taxonomy" id="90370"/>
    <lineage>
        <taxon>Bacteria</taxon>
        <taxon>Pseudomonadati</taxon>
        <taxon>Pseudomonadota</taxon>
        <taxon>Gammaproteobacteria</taxon>
        <taxon>Enterobacterales</taxon>
        <taxon>Enterobacteriaceae</taxon>
        <taxon>Salmonella</taxon>
    </lineage>
</organism>
<dbReference type="EC" id="1.11.1.24" evidence="1"/>
<dbReference type="EMBL" id="AL513382">
    <property type="protein sequence ID" value="CAD01648.1"/>
    <property type="molecule type" value="Genomic_DNA"/>
</dbReference>
<dbReference type="EMBL" id="AE014613">
    <property type="protein sequence ID" value="AAO69217.1"/>
    <property type="molecule type" value="Genomic_DNA"/>
</dbReference>
<dbReference type="RefSeq" id="NP_455822.1">
    <property type="nucleotide sequence ID" value="NC_003198.1"/>
</dbReference>
<dbReference type="RefSeq" id="WP_000084375.1">
    <property type="nucleotide sequence ID" value="NZ_WSUR01000041.1"/>
</dbReference>
<dbReference type="SMR" id="Q8Z7A8"/>
<dbReference type="STRING" id="220341.gene:17585338"/>
<dbReference type="KEGG" id="stt:t1586"/>
<dbReference type="KEGG" id="sty:STY1381"/>
<dbReference type="PATRIC" id="fig|220341.7.peg.1390"/>
<dbReference type="eggNOG" id="COG2077">
    <property type="taxonomic scope" value="Bacteria"/>
</dbReference>
<dbReference type="HOGENOM" id="CLU_042529_12_2_6"/>
<dbReference type="OMA" id="ITQEPNY"/>
<dbReference type="OrthoDB" id="9781543at2"/>
<dbReference type="Proteomes" id="UP000000541">
    <property type="component" value="Chromosome"/>
</dbReference>
<dbReference type="Proteomes" id="UP000002670">
    <property type="component" value="Chromosome"/>
</dbReference>
<dbReference type="GO" id="GO:0008379">
    <property type="term" value="F:thioredoxin peroxidase activity"/>
    <property type="evidence" value="ECO:0007669"/>
    <property type="project" value="UniProtKB-UniRule"/>
</dbReference>
<dbReference type="CDD" id="cd03014">
    <property type="entry name" value="PRX_Atyp2cys"/>
    <property type="match status" value="1"/>
</dbReference>
<dbReference type="FunFam" id="3.40.30.10:FF:000056">
    <property type="entry name" value="Thiol peroxidase"/>
    <property type="match status" value="1"/>
</dbReference>
<dbReference type="Gene3D" id="3.40.30.10">
    <property type="entry name" value="Glutaredoxin"/>
    <property type="match status" value="1"/>
</dbReference>
<dbReference type="HAMAP" id="MF_00269">
    <property type="entry name" value="Tpx"/>
    <property type="match status" value="1"/>
</dbReference>
<dbReference type="InterPro" id="IPR013740">
    <property type="entry name" value="Redoxin"/>
</dbReference>
<dbReference type="InterPro" id="IPR036249">
    <property type="entry name" value="Thioredoxin-like_sf"/>
</dbReference>
<dbReference type="InterPro" id="IPR013766">
    <property type="entry name" value="Thioredoxin_domain"/>
</dbReference>
<dbReference type="InterPro" id="IPR002065">
    <property type="entry name" value="TPX"/>
</dbReference>
<dbReference type="InterPro" id="IPR018219">
    <property type="entry name" value="Tpx_CS"/>
</dbReference>
<dbReference type="InterPro" id="IPR050455">
    <property type="entry name" value="Tpx_Peroxidase_subfamily"/>
</dbReference>
<dbReference type="NCBIfam" id="NF001808">
    <property type="entry name" value="PRK00522.1"/>
    <property type="match status" value="1"/>
</dbReference>
<dbReference type="PANTHER" id="PTHR43110">
    <property type="entry name" value="THIOL PEROXIDASE"/>
    <property type="match status" value="1"/>
</dbReference>
<dbReference type="PANTHER" id="PTHR43110:SF1">
    <property type="entry name" value="THIOL PEROXIDASE"/>
    <property type="match status" value="1"/>
</dbReference>
<dbReference type="Pfam" id="PF08534">
    <property type="entry name" value="Redoxin"/>
    <property type="match status" value="1"/>
</dbReference>
<dbReference type="SUPFAM" id="SSF52833">
    <property type="entry name" value="Thioredoxin-like"/>
    <property type="match status" value="1"/>
</dbReference>
<dbReference type="PROSITE" id="PS51352">
    <property type="entry name" value="THIOREDOXIN_2"/>
    <property type="match status" value="1"/>
</dbReference>
<dbReference type="PROSITE" id="PS01265">
    <property type="entry name" value="TPX"/>
    <property type="match status" value="1"/>
</dbReference>
<sequence length="168" mass="18084">MSQTVHFQDNPVTVANVIPQAGSKAQAFTLVAKDLSDVSLSQYAGKRKVLNIFPSIDTGVCAASVRKFNQLATEVENTVVLCVSADLPFAQSRFCGAEGLSNVITLSTLRNNEFLKNYGVEIVDGPLKGLAARAVIVLDENDNVIFSQLVDEITHEPDYDAALNVLKA</sequence>
<keyword id="KW-0049">Antioxidant</keyword>
<keyword id="KW-1015">Disulfide bond</keyword>
<keyword id="KW-0560">Oxidoreductase</keyword>
<keyword id="KW-0575">Peroxidase</keyword>
<keyword id="KW-0676">Redox-active center</keyword>